<feature type="chain" id="PRO_0000194136" description="Bifunctional riboflavin kinase/FMN adenylyltransferase">
    <location>
        <begin position="1"/>
        <end position="338"/>
    </location>
</feature>
<feature type="strand" evidence="3">
    <location>
        <begin position="2"/>
        <end position="6"/>
    </location>
</feature>
<feature type="helix" evidence="3">
    <location>
        <begin position="7"/>
        <end position="9"/>
    </location>
</feature>
<feature type="strand" evidence="3">
    <location>
        <begin position="17"/>
        <end position="22"/>
    </location>
</feature>
<feature type="helix" evidence="3">
    <location>
        <begin position="29"/>
        <end position="45"/>
    </location>
</feature>
<feature type="strand" evidence="3">
    <location>
        <begin position="48"/>
        <end position="56"/>
    </location>
</feature>
<feature type="helix" evidence="3">
    <location>
        <begin position="58"/>
        <end position="62"/>
    </location>
</feature>
<feature type="strand" evidence="3">
    <location>
        <begin position="70"/>
        <end position="72"/>
    </location>
</feature>
<feature type="helix" evidence="3">
    <location>
        <begin position="74"/>
        <end position="83"/>
    </location>
</feature>
<feature type="strand" evidence="3">
    <location>
        <begin position="87"/>
        <end position="92"/>
    </location>
</feature>
<feature type="turn" evidence="3">
    <location>
        <begin position="94"/>
        <end position="96"/>
    </location>
</feature>
<feature type="strand" evidence="3">
    <location>
        <begin position="97"/>
        <end position="100"/>
    </location>
</feature>
<feature type="helix" evidence="3">
    <location>
        <begin position="103"/>
        <end position="109"/>
    </location>
</feature>
<feature type="helix" evidence="3">
    <location>
        <begin position="110"/>
        <end position="114"/>
    </location>
</feature>
<feature type="strand" evidence="3">
    <location>
        <begin position="117"/>
        <end position="123"/>
    </location>
</feature>
<feature type="strand" evidence="3">
    <location>
        <begin position="127"/>
        <end position="129"/>
    </location>
</feature>
<feature type="helix" evidence="3">
    <location>
        <begin position="130"/>
        <end position="132"/>
    </location>
</feature>
<feature type="helix" evidence="3">
    <location>
        <begin position="136"/>
        <end position="142"/>
    </location>
</feature>
<feature type="turn" evidence="3">
    <location>
        <begin position="143"/>
        <end position="146"/>
    </location>
</feature>
<feature type="strand" evidence="3">
    <location>
        <begin position="147"/>
        <end position="152"/>
    </location>
</feature>
<feature type="helix" evidence="3">
    <location>
        <begin position="164"/>
        <end position="172"/>
    </location>
</feature>
<feature type="helix" evidence="3">
    <location>
        <begin position="176"/>
        <end position="183"/>
    </location>
</feature>
<feature type="strand" evidence="4">
    <location>
        <begin position="188"/>
        <end position="192"/>
    </location>
</feature>
<feature type="helix" evidence="4">
    <location>
        <begin position="200"/>
        <end position="204"/>
    </location>
</feature>
<feature type="strand" evidence="4">
    <location>
        <begin position="209"/>
        <end position="212"/>
    </location>
</feature>
<feature type="strand" evidence="4">
    <location>
        <begin position="222"/>
        <end position="231"/>
    </location>
</feature>
<feature type="strand" evidence="5">
    <location>
        <begin position="239"/>
        <end position="241"/>
    </location>
</feature>
<feature type="strand" evidence="4">
    <location>
        <begin position="247"/>
        <end position="255"/>
    </location>
</feature>
<feature type="turn" evidence="4">
    <location>
        <begin position="258"/>
        <end position="260"/>
    </location>
</feature>
<feature type="strand" evidence="4">
    <location>
        <begin position="266"/>
        <end position="271"/>
    </location>
</feature>
<feature type="strand" evidence="4">
    <location>
        <begin position="282"/>
        <end position="292"/>
    </location>
</feature>
<feature type="helix" evidence="4">
    <location>
        <begin position="300"/>
        <end position="324"/>
    </location>
</feature>
<feature type="turn" evidence="3">
    <location>
        <begin position="325"/>
        <end position="327"/>
    </location>
</feature>
<feature type="helix" evidence="4">
    <location>
        <begin position="329"/>
        <end position="331"/>
    </location>
</feature>
<protein>
    <recommendedName>
        <fullName evidence="2">Bifunctional riboflavin kinase/FMN adenylyltransferase</fullName>
    </recommendedName>
    <alternativeName>
        <fullName evidence="2">Riboflavin biosynthesis protein RibF</fullName>
    </alternativeName>
    <domain>
        <recommendedName>
            <fullName evidence="2">Riboflavin kinase</fullName>
            <ecNumber evidence="1">2.7.1.26</ecNumber>
        </recommendedName>
        <alternativeName>
            <fullName evidence="2">Flavokinase</fullName>
        </alternativeName>
    </domain>
    <domain>
        <recommendedName>
            <fullName evidence="2">FMN adenylyltransferase</fullName>
            <ecNumber evidence="1">2.7.7.2</ecNumber>
        </recommendedName>
        <alternativeName>
            <fullName evidence="2">FAD pyrophosphorylase</fullName>
        </alternativeName>
        <alternativeName>
            <fullName evidence="2">FAD synthase</fullName>
        </alternativeName>
    </domain>
</protein>
<evidence type="ECO:0000269" key="1">
    <source>
    </source>
</evidence>
<evidence type="ECO:0000305" key="2"/>
<evidence type="ECO:0007829" key="3">
    <source>
        <dbReference type="PDB" id="2X0K"/>
    </source>
</evidence>
<evidence type="ECO:0007829" key="4">
    <source>
        <dbReference type="PDB" id="5A89"/>
    </source>
</evidence>
<evidence type="ECO:0007829" key="5">
    <source>
        <dbReference type="PDB" id="5A8A"/>
    </source>
</evidence>
<name>RIBF_CORAM</name>
<comment type="function">
    <text evidence="1">Catalyzes the phosphorylation of riboflavin to FMN followed by the adenylation of FMN to FAD.</text>
</comment>
<comment type="catalytic activity">
    <reaction evidence="1">
        <text>riboflavin + ATP = FMN + ADP + H(+)</text>
        <dbReference type="Rhea" id="RHEA:14357"/>
        <dbReference type="ChEBI" id="CHEBI:15378"/>
        <dbReference type="ChEBI" id="CHEBI:30616"/>
        <dbReference type="ChEBI" id="CHEBI:57986"/>
        <dbReference type="ChEBI" id="CHEBI:58210"/>
        <dbReference type="ChEBI" id="CHEBI:456216"/>
        <dbReference type="EC" id="2.7.1.26"/>
    </reaction>
</comment>
<comment type="catalytic activity">
    <reaction evidence="1">
        <text>FMN + ATP + H(+) = FAD + diphosphate</text>
        <dbReference type="Rhea" id="RHEA:17237"/>
        <dbReference type="ChEBI" id="CHEBI:15378"/>
        <dbReference type="ChEBI" id="CHEBI:30616"/>
        <dbReference type="ChEBI" id="CHEBI:33019"/>
        <dbReference type="ChEBI" id="CHEBI:57692"/>
        <dbReference type="ChEBI" id="CHEBI:58210"/>
        <dbReference type="EC" id="2.7.7.2"/>
    </reaction>
</comment>
<comment type="cofactor">
    <cofactor evidence="1">
        <name>a divalent metal cation</name>
        <dbReference type="ChEBI" id="CHEBI:60240"/>
    </cofactor>
</comment>
<comment type="activity regulation">
    <text evidence="1">Higher divalent cation concentrations lead to decrease in the turnover of riboflavin and the 5'-phosphotransferase activity, while the adenylyltransferase activity increases.</text>
</comment>
<comment type="biophysicochemical properties">
    <kinetics>
        <KM evidence="1">5 uM for Mg-ATP (for riboflavin kinase activity)</KM>
        <KM evidence="1">160 uM for Mg-ATP (for FMN adenylyltransferase activity)</KM>
    </kinetics>
    <phDependence>
        <text evidence="1">With magnesium ions the highest turnover of riboflavin is observed between pH 6 and 7.5, while that of FAD is between 7.0 and 9.0. With zinc ions a steady increase in riboflavin turnover is observed between pH 4.5 and 10, while FAD is the major product at pH 7.0 and decreases rapidly above pH 8.0.</text>
    </phDependence>
</comment>
<comment type="pathway">
    <text evidence="2">Cofactor biosynthesis; FAD biosynthesis; FAD from FMN: step 1/1.</text>
</comment>
<comment type="pathway">
    <text evidence="2">Cofactor biosynthesis; FMN biosynthesis; FMN from riboflavin (ATP route): step 1/1.</text>
</comment>
<comment type="similarity">
    <text evidence="2">Belongs to the RibF family.</text>
</comment>
<keyword id="KW-0002">3D-structure</keyword>
<keyword id="KW-0067">ATP-binding</keyword>
<keyword id="KW-0903">Direct protein sequencing</keyword>
<keyword id="KW-0274">FAD</keyword>
<keyword id="KW-0285">Flavoprotein</keyword>
<keyword id="KW-0288">FMN</keyword>
<keyword id="KW-0418">Kinase</keyword>
<keyword id="KW-0511">Multifunctional enzyme</keyword>
<keyword id="KW-0547">Nucleotide-binding</keyword>
<keyword id="KW-0548">Nucleotidyltransferase</keyword>
<keyword id="KW-0808">Transferase</keyword>
<reference key="1">
    <citation type="journal article" date="1995" name="Biosci. Biotechnol. Biochem.">
        <title>Nucleotide sequence of the FAD synthetase gene from Corynebacterium ammoniagenes and its expression in Escherichia coli.</title>
        <authorList>
            <person name="Nakagawa S."/>
            <person name="Igarashi A."/>
            <person name="Ohta T."/>
            <person name="Hagihara T."/>
            <person name="Fujio T."/>
            <person name="Aisaka K."/>
        </authorList>
    </citation>
    <scope>NUCLEOTIDE SEQUENCE [GENOMIC DNA]</scope>
    <source>
        <strain>ATCC 6872 / DSM 20305 / IAM 1645 / KCTC 1019 / NCTC 2399</strain>
    </source>
</reference>
<reference key="2">
    <citation type="journal article" date="1986" name="J. Biol. Chem.">
        <title>Purification and characterization of FAD synthetase from Brevibacterium ammoniagenes.</title>
        <authorList>
            <person name="Manstein D.J."/>
            <person name="Pai E.F."/>
        </authorList>
    </citation>
    <scope>PROTEIN SEQUENCE OF 1-18</scope>
    <scope>FUNCTION</scope>
    <scope>CATALYTIC ACTIVITY</scope>
    <scope>COFACTOR</scope>
    <scope>ACTIVITY REGULATION</scope>
    <scope>BIOPHYSICOCHEMICAL PROPERTIES</scope>
    <source>
        <strain>ATCC 6872 / DSM 20305 / IAM 1645 / KCTC 1019 / NCTC 2399</strain>
    </source>
</reference>
<gene>
    <name type="primary">ribF</name>
</gene>
<proteinExistence type="evidence at protein level"/>
<dbReference type="EC" id="2.7.1.26" evidence="1"/>
<dbReference type="EC" id="2.7.7.2" evidence="1"/>
<dbReference type="EMBL" id="D37967">
    <property type="protein sequence ID" value="BAA07182.1"/>
    <property type="molecule type" value="Genomic_DNA"/>
</dbReference>
<dbReference type="PIR" id="JC4008">
    <property type="entry name" value="JC4008"/>
</dbReference>
<dbReference type="PDB" id="2X0K">
    <property type="method" value="X-ray"/>
    <property type="resolution" value="1.95 A"/>
    <property type="chains" value="A/B=1-338"/>
</dbReference>
<dbReference type="PDB" id="3ZUG">
    <property type="method" value="X-ray"/>
    <property type="resolution" value="2.05 A"/>
    <property type="chains" value="A/B=1-338"/>
</dbReference>
<dbReference type="PDB" id="4UZE">
    <property type="method" value="X-ray"/>
    <property type="resolution" value="2.34 A"/>
    <property type="chains" value="A/B=1-338"/>
</dbReference>
<dbReference type="PDB" id="4UZF">
    <property type="method" value="X-ray"/>
    <property type="resolution" value="2.52 A"/>
    <property type="chains" value="A/B=1-338"/>
</dbReference>
<dbReference type="PDB" id="5A88">
    <property type="method" value="X-ray"/>
    <property type="resolution" value="2.08 A"/>
    <property type="chains" value="A/B/C/D=183-338"/>
</dbReference>
<dbReference type="PDB" id="5A89">
    <property type="method" value="X-ray"/>
    <property type="resolution" value="1.65 A"/>
    <property type="chains" value="A/B=183-338"/>
</dbReference>
<dbReference type="PDB" id="5A8A">
    <property type="method" value="X-ray"/>
    <property type="resolution" value="1.80 A"/>
    <property type="chains" value="A/B=183-338"/>
</dbReference>
<dbReference type="PDB" id="5FNZ">
    <property type="method" value="X-ray"/>
    <property type="resolution" value="2.52 A"/>
    <property type="chains" value="A/B=1-338"/>
</dbReference>
<dbReference type="PDB" id="5FO0">
    <property type="method" value="X-ray"/>
    <property type="resolution" value="2.51 A"/>
    <property type="chains" value="A/B=1-338"/>
</dbReference>
<dbReference type="PDB" id="5FO1">
    <property type="method" value="X-ray"/>
    <property type="resolution" value="2.45 A"/>
    <property type="chains" value="A/B=1-338"/>
</dbReference>
<dbReference type="PDBsum" id="2X0K"/>
<dbReference type="PDBsum" id="3ZUG"/>
<dbReference type="PDBsum" id="4UZE"/>
<dbReference type="PDBsum" id="4UZF"/>
<dbReference type="PDBsum" id="5A88"/>
<dbReference type="PDBsum" id="5A89"/>
<dbReference type="PDBsum" id="5A8A"/>
<dbReference type="PDBsum" id="5FNZ"/>
<dbReference type="PDBsum" id="5FO0"/>
<dbReference type="PDBsum" id="5FO1"/>
<dbReference type="SMR" id="Q59263"/>
<dbReference type="MoonProt" id="Q59263"/>
<dbReference type="BRENDA" id="2.7.1.26">
    <property type="organism ID" value="959"/>
</dbReference>
<dbReference type="BRENDA" id="2.7.7.2">
    <property type="organism ID" value="959"/>
</dbReference>
<dbReference type="UniPathway" id="UPA00276">
    <property type="reaction ID" value="UER00406"/>
</dbReference>
<dbReference type="UniPathway" id="UPA00277">
    <property type="reaction ID" value="UER00407"/>
</dbReference>
<dbReference type="EvolutionaryTrace" id="Q59263"/>
<dbReference type="GO" id="GO:0005524">
    <property type="term" value="F:ATP binding"/>
    <property type="evidence" value="ECO:0007669"/>
    <property type="project" value="UniProtKB-KW"/>
</dbReference>
<dbReference type="GO" id="GO:0003919">
    <property type="term" value="F:FMN adenylyltransferase activity"/>
    <property type="evidence" value="ECO:0007669"/>
    <property type="project" value="UniProtKB-EC"/>
</dbReference>
<dbReference type="GO" id="GO:0008531">
    <property type="term" value="F:riboflavin kinase activity"/>
    <property type="evidence" value="ECO:0007669"/>
    <property type="project" value="UniProtKB-EC"/>
</dbReference>
<dbReference type="GO" id="GO:0006747">
    <property type="term" value="P:FAD biosynthetic process"/>
    <property type="evidence" value="ECO:0007669"/>
    <property type="project" value="UniProtKB-UniPathway"/>
</dbReference>
<dbReference type="GO" id="GO:0009398">
    <property type="term" value="P:FMN biosynthetic process"/>
    <property type="evidence" value="ECO:0007669"/>
    <property type="project" value="UniProtKB-UniPathway"/>
</dbReference>
<dbReference type="GO" id="GO:0009231">
    <property type="term" value="P:riboflavin biosynthetic process"/>
    <property type="evidence" value="ECO:0007669"/>
    <property type="project" value="InterPro"/>
</dbReference>
<dbReference type="CDD" id="cd02064">
    <property type="entry name" value="FAD_synthetase_N"/>
    <property type="match status" value="1"/>
</dbReference>
<dbReference type="FunFam" id="2.40.30.30:FF:000003">
    <property type="entry name" value="Riboflavin biosynthesis protein"/>
    <property type="match status" value="1"/>
</dbReference>
<dbReference type="FunFam" id="3.40.50.620:FF:000021">
    <property type="entry name" value="Riboflavin biosynthesis protein"/>
    <property type="match status" value="1"/>
</dbReference>
<dbReference type="Gene3D" id="3.40.50.620">
    <property type="entry name" value="HUPs"/>
    <property type="match status" value="1"/>
</dbReference>
<dbReference type="Gene3D" id="2.40.30.30">
    <property type="entry name" value="Riboflavin kinase-like"/>
    <property type="match status" value="1"/>
</dbReference>
<dbReference type="InterPro" id="IPR015864">
    <property type="entry name" value="FAD_synthase"/>
</dbReference>
<dbReference type="InterPro" id="IPR023468">
    <property type="entry name" value="Riboflavin_kinase"/>
</dbReference>
<dbReference type="InterPro" id="IPR002606">
    <property type="entry name" value="Riboflavin_kinase_bac"/>
</dbReference>
<dbReference type="InterPro" id="IPR015865">
    <property type="entry name" value="Riboflavin_kinase_bac/euk"/>
</dbReference>
<dbReference type="InterPro" id="IPR023465">
    <property type="entry name" value="Riboflavin_kinase_dom_sf"/>
</dbReference>
<dbReference type="InterPro" id="IPR014729">
    <property type="entry name" value="Rossmann-like_a/b/a_fold"/>
</dbReference>
<dbReference type="NCBIfam" id="NF004160">
    <property type="entry name" value="PRK05627.1-3"/>
    <property type="match status" value="1"/>
</dbReference>
<dbReference type="NCBIfam" id="TIGR00083">
    <property type="entry name" value="ribF"/>
    <property type="match status" value="1"/>
</dbReference>
<dbReference type="PANTHER" id="PTHR22749:SF6">
    <property type="entry name" value="RIBOFLAVIN KINASE"/>
    <property type="match status" value="1"/>
</dbReference>
<dbReference type="PANTHER" id="PTHR22749">
    <property type="entry name" value="RIBOFLAVIN KINASE/FMN ADENYLYLTRANSFERASE"/>
    <property type="match status" value="1"/>
</dbReference>
<dbReference type="Pfam" id="PF06574">
    <property type="entry name" value="FAD_syn"/>
    <property type="match status" value="1"/>
</dbReference>
<dbReference type="Pfam" id="PF01687">
    <property type="entry name" value="Flavokinase"/>
    <property type="match status" value="1"/>
</dbReference>
<dbReference type="PIRSF" id="PIRSF004491">
    <property type="entry name" value="FAD_Synth"/>
    <property type="match status" value="1"/>
</dbReference>
<dbReference type="SMART" id="SM00904">
    <property type="entry name" value="Flavokinase"/>
    <property type="match status" value="1"/>
</dbReference>
<dbReference type="SUPFAM" id="SSF52374">
    <property type="entry name" value="Nucleotidylyl transferase"/>
    <property type="match status" value="1"/>
</dbReference>
<dbReference type="SUPFAM" id="SSF82114">
    <property type="entry name" value="Riboflavin kinase-like"/>
    <property type="match status" value="1"/>
</dbReference>
<accession>Q59263</accession>
<sequence>MDIWYGTAAVPKDLDNSAVTIGVFDGVHRGHQKLINATVEKAREVGAKAIMVTFDPHPVSVFLPRRAPLGITTLAERFALAESFGIDGVLVIDFTRELSGTSPEKYVEFLLEDTLHASHVVVGANFTFGENAAGTADSLRQICQSRLTVDVIDLLDDEGVRISSTTVREFLSEGDVARANWALGRHFYVTGPVVRGAGRGGKELGFPTANQYFHDTVALPADGVYAGWLTILPTEAPVSGNMEPEVAYAAAISVGTNPTFGDEQRSVESFVLDRDADLYGHDVKVEFVDHVRAMEKFDSVEQLLEVMAKDVQKTRTLLAQDVQAHKMAPETYFLQAES</sequence>
<organism>
    <name type="scientific">Corynebacterium ammoniagenes</name>
    <name type="common">Brevibacterium ammoniagenes</name>
    <dbReference type="NCBI Taxonomy" id="1697"/>
    <lineage>
        <taxon>Bacteria</taxon>
        <taxon>Bacillati</taxon>
        <taxon>Actinomycetota</taxon>
        <taxon>Actinomycetes</taxon>
        <taxon>Mycobacteriales</taxon>
        <taxon>Corynebacteriaceae</taxon>
        <taxon>Corynebacterium</taxon>
    </lineage>
</organism>